<reference key="1">
    <citation type="journal article" date="2004" name="Nucleic Acids Res.">
        <title>Thermoadaptation trait revealed by the genome sequence of thermophilic Geobacillus kaustophilus.</title>
        <authorList>
            <person name="Takami H."/>
            <person name="Takaki Y."/>
            <person name="Chee G.-J."/>
            <person name="Nishi S."/>
            <person name="Shimamura S."/>
            <person name="Suzuki H."/>
            <person name="Matsui S."/>
            <person name="Uchiyama I."/>
        </authorList>
    </citation>
    <scope>NUCLEOTIDE SEQUENCE [LARGE SCALE GENOMIC DNA]</scope>
    <source>
        <strain>HTA426</strain>
    </source>
</reference>
<feature type="chain" id="PRO_0000237791" description="2-C-methyl-D-erythritol 4-phosphate cytidylyltransferase">
    <location>
        <begin position="1"/>
        <end position="228"/>
    </location>
</feature>
<feature type="site" description="Transition state stabilizer" evidence="1">
    <location>
        <position position="15"/>
    </location>
</feature>
<feature type="site" description="Transition state stabilizer" evidence="1">
    <location>
        <position position="22"/>
    </location>
</feature>
<feature type="site" description="Positions MEP for the nucleophilic attack" evidence="1">
    <location>
        <position position="152"/>
    </location>
</feature>
<feature type="site" description="Positions MEP for the nucleophilic attack" evidence="1">
    <location>
        <position position="208"/>
    </location>
</feature>
<accession>Q5L433</accession>
<keyword id="KW-0414">Isoprene biosynthesis</keyword>
<keyword id="KW-0548">Nucleotidyltransferase</keyword>
<keyword id="KW-1185">Reference proteome</keyword>
<keyword id="KW-0808">Transferase</keyword>
<dbReference type="EC" id="2.7.7.60" evidence="1"/>
<dbReference type="EMBL" id="BA000043">
    <property type="protein sequence ID" value="BAD74366.1"/>
    <property type="molecule type" value="Genomic_DNA"/>
</dbReference>
<dbReference type="RefSeq" id="WP_011229596.1">
    <property type="nucleotide sequence ID" value="NC_006510.1"/>
</dbReference>
<dbReference type="SMR" id="Q5L433"/>
<dbReference type="STRING" id="235909.GK0081"/>
<dbReference type="KEGG" id="gka:GK0081"/>
<dbReference type="eggNOG" id="COG1211">
    <property type="taxonomic scope" value="Bacteria"/>
</dbReference>
<dbReference type="HOGENOM" id="CLU_061281_2_2_9"/>
<dbReference type="UniPathway" id="UPA00056">
    <property type="reaction ID" value="UER00093"/>
</dbReference>
<dbReference type="Proteomes" id="UP000001172">
    <property type="component" value="Chromosome"/>
</dbReference>
<dbReference type="GO" id="GO:0050518">
    <property type="term" value="F:2-C-methyl-D-erythritol 4-phosphate cytidylyltransferase activity"/>
    <property type="evidence" value="ECO:0007669"/>
    <property type="project" value="UniProtKB-UniRule"/>
</dbReference>
<dbReference type="GO" id="GO:0019288">
    <property type="term" value="P:isopentenyl diphosphate biosynthetic process, methylerythritol 4-phosphate pathway"/>
    <property type="evidence" value="ECO:0007669"/>
    <property type="project" value="UniProtKB-UniRule"/>
</dbReference>
<dbReference type="CDD" id="cd02516">
    <property type="entry name" value="CDP-ME_synthetase"/>
    <property type="match status" value="1"/>
</dbReference>
<dbReference type="FunFam" id="3.90.550.10:FF:000003">
    <property type="entry name" value="2-C-methyl-D-erythritol 4-phosphate cytidylyltransferase"/>
    <property type="match status" value="1"/>
</dbReference>
<dbReference type="Gene3D" id="3.90.550.10">
    <property type="entry name" value="Spore Coat Polysaccharide Biosynthesis Protein SpsA, Chain A"/>
    <property type="match status" value="1"/>
</dbReference>
<dbReference type="HAMAP" id="MF_00108">
    <property type="entry name" value="IspD"/>
    <property type="match status" value="1"/>
</dbReference>
<dbReference type="InterPro" id="IPR001228">
    <property type="entry name" value="IspD"/>
</dbReference>
<dbReference type="InterPro" id="IPR034683">
    <property type="entry name" value="IspD/TarI"/>
</dbReference>
<dbReference type="InterPro" id="IPR050088">
    <property type="entry name" value="IspD/TarI_cytidylyltransf_bact"/>
</dbReference>
<dbReference type="InterPro" id="IPR018294">
    <property type="entry name" value="ISPD_synthase_CS"/>
</dbReference>
<dbReference type="InterPro" id="IPR029044">
    <property type="entry name" value="Nucleotide-diphossugar_trans"/>
</dbReference>
<dbReference type="NCBIfam" id="TIGR00453">
    <property type="entry name" value="ispD"/>
    <property type="match status" value="1"/>
</dbReference>
<dbReference type="PANTHER" id="PTHR32125">
    <property type="entry name" value="2-C-METHYL-D-ERYTHRITOL 4-PHOSPHATE CYTIDYLYLTRANSFERASE, CHLOROPLASTIC"/>
    <property type="match status" value="1"/>
</dbReference>
<dbReference type="PANTHER" id="PTHR32125:SF4">
    <property type="entry name" value="2-C-METHYL-D-ERYTHRITOL 4-PHOSPHATE CYTIDYLYLTRANSFERASE, CHLOROPLASTIC"/>
    <property type="match status" value="1"/>
</dbReference>
<dbReference type="Pfam" id="PF01128">
    <property type="entry name" value="IspD"/>
    <property type="match status" value="1"/>
</dbReference>
<dbReference type="SUPFAM" id="SSF53448">
    <property type="entry name" value="Nucleotide-diphospho-sugar transferases"/>
    <property type="match status" value="1"/>
</dbReference>
<dbReference type="PROSITE" id="PS01295">
    <property type="entry name" value="ISPD"/>
    <property type="match status" value="1"/>
</dbReference>
<proteinExistence type="inferred from homology"/>
<organism>
    <name type="scientific">Geobacillus kaustophilus (strain HTA426)</name>
    <dbReference type="NCBI Taxonomy" id="235909"/>
    <lineage>
        <taxon>Bacteria</taxon>
        <taxon>Bacillati</taxon>
        <taxon>Bacillota</taxon>
        <taxon>Bacilli</taxon>
        <taxon>Bacillales</taxon>
        <taxon>Anoxybacillaceae</taxon>
        <taxon>Geobacillus</taxon>
        <taxon>Geobacillus thermoleovorans group</taxon>
    </lineage>
</organism>
<gene>
    <name evidence="1" type="primary">ispD</name>
    <name type="ordered locus">GK0081</name>
</gene>
<evidence type="ECO:0000255" key="1">
    <source>
        <dbReference type="HAMAP-Rule" id="MF_00108"/>
    </source>
</evidence>
<comment type="function">
    <text evidence="1">Catalyzes the formation of 4-diphosphocytidyl-2-C-methyl-D-erythritol from CTP and 2-C-methyl-D-erythritol 4-phosphate (MEP).</text>
</comment>
<comment type="catalytic activity">
    <reaction evidence="1">
        <text>2-C-methyl-D-erythritol 4-phosphate + CTP + H(+) = 4-CDP-2-C-methyl-D-erythritol + diphosphate</text>
        <dbReference type="Rhea" id="RHEA:13429"/>
        <dbReference type="ChEBI" id="CHEBI:15378"/>
        <dbReference type="ChEBI" id="CHEBI:33019"/>
        <dbReference type="ChEBI" id="CHEBI:37563"/>
        <dbReference type="ChEBI" id="CHEBI:57823"/>
        <dbReference type="ChEBI" id="CHEBI:58262"/>
        <dbReference type="EC" id="2.7.7.60"/>
    </reaction>
</comment>
<comment type="pathway">
    <text evidence="1">Isoprenoid biosynthesis; isopentenyl diphosphate biosynthesis via DXP pathway; isopentenyl diphosphate from 1-deoxy-D-xylulose 5-phosphate: step 2/6.</text>
</comment>
<comment type="similarity">
    <text evidence="1">Belongs to the IspD/TarI cytidylyltransferase family. IspD subfamily.</text>
</comment>
<name>ISPD_GEOKA</name>
<protein>
    <recommendedName>
        <fullName evidence="1">2-C-methyl-D-erythritol 4-phosphate cytidylyltransferase</fullName>
        <ecNumber evidence="1">2.7.7.60</ecNumber>
    </recommendedName>
    <alternativeName>
        <fullName evidence="1">4-diphosphocytidyl-2C-methyl-D-erythritol synthase</fullName>
    </alternativeName>
    <alternativeName>
        <fullName evidence="1">MEP cytidylyltransferase</fullName>
        <shortName evidence="1">MCT</shortName>
    </alternativeName>
</protein>
<sequence length="228" mass="25354">MNYEAIVLAAGRGKRMNAGMNKQFLELGGEPLIVRTLNVFERDERCTRIVLVVNPAERSRFEQLLARFRIQKVAALTDGGEERQHSVYNGLQALAGEEIVLIHDGARPFVRVHHLHELVNAAVQYGAAIPAVRVKDTIKKANGLFVEQTIDRSSLWAVQTPQAFRLSLIMEAHEAAKQAGYLGTDDASLVERIGKPVKIIEGDYRNIKLTTPEDLLFAEAILASRMAE</sequence>